<protein>
    <recommendedName>
        <fullName evidence="1">p-hydroxybenzoic acid efflux pump subunit AaeB</fullName>
        <shortName evidence="1">pHBA efflux pump protein B</shortName>
    </recommendedName>
</protein>
<dbReference type="EMBL" id="CP000034">
    <property type="protein sequence ID" value="ABB63406.1"/>
    <property type="molecule type" value="Genomic_DNA"/>
</dbReference>
<dbReference type="RefSeq" id="WP_000510941.1">
    <property type="nucleotide sequence ID" value="NC_007606.1"/>
</dbReference>
<dbReference type="RefSeq" id="YP_404897.1">
    <property type="nucleotide sequence ID" value="NC_007606.1"/>
</dbReference>
<dbReference type="SMR" id="Q32B99"/>
<dbReference type="STRING" id="300267.SDY_3416"/>
<dbReference type="EnsemblBacteria" id="ABB63406">
    <property type="protein sequence ID" value="ABB63406"/>
    <property type="gene ID" value="SDY_3416"/>
</dbReference>
<dbReference type="KEGG" id="sdy:SDY_3416"/>
<dbReference type="PATRIC" id="fig|300267.13.peg.4074"/>
<dbReference type="HOGENOM" id="CLU_027647_0_0_6"/>
<dbReference type="Proteomes" id="UP000002716">
    <property type="component" value="Chromosome"/>
</dbReference>
<dbReference type="GO" id="GO:0005886">
    <property type="term" value="C:plasma membrane"/>
    <property type="evidence" value="ECO:0007669"/>
    <property type="project" value="UniProtKB-SubCell"/>
</dbReference>
<dbReference type="GO" id="GO:0022857">
    <property type="term" value="F:transmembrane transporter activity"/>
    <property type="evidence" value="ECO:0007669"/>
    <property type="project" value="UniProtKB-UniRule"/>
</dbReference>
<dbReference type="GO" id="GO:0046942">
    <property type="term" value="P:carboxylic acid transport"/>
    <property type="evidence" value="ECO:0007669"/>
    <property type="project" value="InterPro"/>
</dbReference>
<dbReference type="HAMAP" id="MF_01545">
    <property type="entry name" value="AaeB"/>
    <property type="match status" value="1"/>
</dbReference>
<dbReference type="InterPro" id="IPR006726">
    <property type="entry name" value="PHBA_efflux_AaeB/fusaric-R"/>
</dbReference>
<dbReference type="InterPro" id="IPR023706">
    <property type="entry name" value="PHBA_efflux_pump_AaeB"/>
</dbReference>
<dbReference type="NCBIfam" id="NF007916">
    <property type="entry name" value="PRK10631.1"/>
    <property type="match status" value="1"/>
</dbReference>
<dbReference type="PANTHER" id="PTHR30509:SF9">
    <property type="entry name" value="MULTIDRUG RESISTANCE PROTEIN MDTO"/>
    <property type="match status" value="1"/>
</dbReference>
<dbReference type="PANTHER" id="PTHR30509">
    <property type="entry name" value="P-HYDROXYBENZOIC ACID EFFLUX PUMP SUBUNIT-RELATED"/>
    <property type="match status" value="1"/>
</dbReference>
<dbReference type="Pfam" id="PF04632">
    <property type="entry name" value="FUSC"/>
    <property type="match status" value="1"/>
</dbReference>
<proteinExistence type="inferred from homology"/>
<reference key="1">
    <citation type="journal article" date="2005" name="Nucleic Acids Res.">
        <title>Genome dynamics and diversity of Shigella species, the etiologic agents of bacillary dysentery.</title>
        <authorList>
            <person name="Yang F."/>
            <person name="Yang J."/>
            <person name="Zhang X."/>
            <person name="Chen L."/>
            <person name="Jiang Y."/>
            <person name="Yan Y."/>
            <person name="Tang X."/>
            <person name="Wang J."/>
            <person name="Xiong Z."/>
            <person name="Dong J."/>
            <person name="Xue Y."/>
            <person name="Zhu Y."/>
            <person name="Xu X."/>
            <person name="Sun L."/>
            <person name="Chen S."/>
            <person name="Nie H."/>
            <person name="Peng J."/>
            <person name="Xu J."/>
            <person name="Wang Y."/>
            <person name="Yuan Z."/>
            <person name="Wen Y."/>
            <person name="Yao Z."/>
            <person name="Shen Y."/>
            <person name="Qiang B."/>
            <person name="Hou Y."/>
            <person name="Yu J."/>
            <person name="Jin Q."/>
        </authorList>
    </citation>
    <scope>NUCLEOTIDE SEQUENCE [LARGE SCALE GENOMIC DNA]</scope>
    <source>
        <strain>Sd197</strain>
    </source>
</reference>
<feature type="chain" id="PRO_0000300566" description="p-hydroxybenzoic acid efflux pump subunit AaeB">
    <location>
        <begin position="1"/>
        <end position="655"/>
    </location>
</feature>
<feature type="transmembrane region" description="Helical" evidence="1">
    <location>
        <begin position="13"/>
        <end position="33"/>
    </location>
</feature>
<feature type="transmembrane region" description="Helical" evidence="1">
    <location>
        <begin position="38"/>
        <end position="58"/>
    </location>
</feature>
<feature type="transmembrane region" description="Helical" evidence="1">
    <location>
        <begin position="69"/>
        <end position="89"/>
    </location>
</feature>
<feature type="transmembrane region" description="Helical" evidence="1">
    <location>
        <begin position="93"/>
        <end position="113"/>
    </location>
</feature>
<feature type="transmembrane region" description="Helical" evidence="1">
    <location>
        <begin position="121"/>
        <end position="141"/>
    </location>
</feature>
<feature type="transmembrane region" description="Helical" evidence="1">
    <location>
        <begin position="152"/>
        <end position="172"/>
    </location>
</feature>
<feature type="transmembrane region" description="Helical" evidence="1">
    <location>
        <begin position="370"/>
        <end position="390"/>
    </location>
</feature>
<feature type="transmembrane region" description="Helical" evidence="1">
    <location>
        <begin position="407"/>
        <end position="427"/>
    </location>
</feature>
<feature type="transmembrane region" description="Helical" evidence="1">
    <location>
        <begin position="431"/>
        <end position="451"/>
    </location>
</feature>
<feature type="transmembrane region" description="Helical" evidence="1">
    <location>
        <begin position="482"/>
        <end position="502"/>
    </location>
</feature>
<evidence type="ECO:0000255" key="1">
    <source>
        <dbReference type="HAMAP-Rule" id="MF_01545"/>
    </source>
</evidence>
<sequence length="655" mass="73621">MGIFSIANQHIRFAVKLATAIVLALFVGFHFQLETPRWAVLTAAIVAAGPAFAAGGEPYSGAIRYRGFLRIIGTFIGCIAGLVIIIAMIRAPLLMILVCCIWAGFCTWISSLVRIENSYAWGLAGYTALIIVITIQPEPLLTPQFAVERCSEIVIGIVCAIMADLLFSPRSIKQEVDRELESLLVAQYQLMQLCIKHGDGEVVDKAWGDLVRRTTALQGMRSNLNMESSRWARANRRLKAINTLSLTLITQSCETYLIQNTRPELITDTFREFFDTPVETAQDVHKQLKRLRRVIAWTGERETPVTIYSWVAAATRYQLLKRGVISNTKINATEEEILQGELEVKVESAERHHAMVNFWRTTLSCILGTLFWLWTGWTSGSGVMVMIAVVTSLAMRLPNPRMVAIDFIYGTLAALPLGLLYFLVIIPNTQQSMLLLCISLAVLGFFLGIEVQKRRLGSMGALASTINIIVPDNPMTFHFSQFLDSALGQIVGCVLAFTVILLVRDKSRDRTGRVLLNQFVSAAVSAMTTNVARRKENHLPALYQQLFLLINKFPGDLPKFRLALTMIIAHQRLRDAPIPVNEDLSAFHRQMRRTADHVISARSDDKRRRYFGQLLEELEIYQEKLRIWQAPPQVTEPVHRLAGMLHKYQHALTDS</sequence>
<gene>
    <name evidence="1" type="primary">aaeB</name>
    <name type="ordered locus">SDY_3416</name>
</gene>
<keyword id="KW-0997">Cell inner membrane</keyword>
<keyword id="KW-1003">Cell membrane</keyword>
<keyword id="KW-0472">Membrane</keyword>
<keyword id="KW-1185">Reference proteome</keyword>
<keyword id="KW-0812">Transmembrane</keyword>
<keyword id="KW-1133">Transmembrane helix</keyword>
<keyword id="KW-0813">Transport</keyword>
<organism>
    <name type="scientific">Shigella dysenteriae serotype 1 (strain Sd197)</name>
    <dbReference type="NCBI Taxonomy" id="300267"/>
    <lineage>
        <taxon>Bacteria</taxon>
        <taxon>Pseudomonadati</taxon>
        <taxon>Pseudomonadota</taxon>
        <taxon>Gammaproteobacteria</taxon>
        <taxon>Enterobacterales</taxon>
        <taxon>Enterobacteriaceae</taxon>
        <taxon>Shigella</taxon>
    </lineage>
</organism>
<name>AAEB_SHIDS</name>
<comment type="function">
    <text evidence="1">Forms an efflux pump with AaeA. Could function as a metabolic relief valve, allowing to eliminate certain compounds when they accumulate to high levels in the cell.</text>
</comment>
<comment type="subcellular location">
    <subcellularLocation>
        <location evidence="1">Cell inner membrane</location>
        <topology evidence="1">Multi-pass membrane protein</topology>
    </subcellularLocation>
</comment>
<comment type="similarity">
    <text evidence="1">Belongs to the aromatic acid exporter ArAE (TC 2.A.85) family.</text>
</comment>
<accession>Q32B99</accession>